<reference key="1">
    <citation type="journal article" date="2003" name="Proc. Natl. Acad. Sci. U.S.A.">
        <title>The complete genome sequence of Chromobacterium violaceum reveals remarkable and exploitable bacterial adaptability.</title>
        <authorList>
            <person name="Vasconcelos A.T.R."/>
            <person name="de Almeida D.F."/>
            <person name="Hungria M."/>
            <person name="Guimaraes C.T."/>
            <person name="Antonio R.V."/>
            <person name="Almeida F.C."/>
            <person name="de Almeida L.G.P."/>
            <person name="de Almeida R."/>
            <person name="Alves-Gomes J.A."/>
            <person name="Andrade E.M."/>
            <person name="Araripe J."/>
            <person name="de Araujo M.F.F."/>
            <person name="Astolfi-Filho S."/>
            <person name="Azevedo V."/>
            <person name="Baptista A.J."/>
            <person name="Bataus L.A.M."/>
            <person name="Batista J.S."/>
            <person name="Belo A."/>
            <person name="van den Berg C."/>
            <person name="Bogo M."/>
            <person name="Bonatto S."/>
            <person name="Bordignon J."/>
            <person name="Brigido M.M."/>
            <person name="Brito C.A."/>
            <person name="Brocchi M."/>
            <person name="Burity H.A."/>
            <person name="Camargo A.A."/>
            <person name="Cardoso D.D.P."/>
            <person name="Carneiro N.P."/>
            <person name="Carraro D.M."/>
            <person name="Carvalho C.M.B."/>
            <person name="Cascardo J.C.M."/>
            <person name="Cavada B.S."/>
            <person name="Chueire L.M.O."/>
            <person name="Creczynski-Pasa T.B."/>
            <person name="Cunha-Junior N.C."/>
            <person name="Fagundes N."/>
            <person name="Falcao C.L."/>
            <person name="Fantinatti F."/>
            <person name="Farias I.P."/>
            <person name="Felipe M.S.S."/>
            <person name="Ferrari L.P."/>
            <person name="Ferro J.A."/>
            <person name="Ferro M.I.T."/>
            <person name="Franco G.R."/>
            <person name="Freitas N.S.A."/>
            <person name="Furlan L.R."/>
            <person name="Gazzinelli R.T."/>
            <person name="Gomes E.A."/>
            <person name="Goncalves P.R."/>
            <person name="Grangeiro T.B."/>
            <person name="Grattapaglia D."/>
            <person name="Grisard E.C."/>
            <person name="Hanna E.S."/>
            <person name="Jardim S.N."/>
            <person name="Laurino J."/>
            <person name="Leoi L.C.T."/>
            <person name="Lima L.F.A."/>
            <person name="Loureiro M.F."/>
            <person name="Lyra M.C.C.P."/>
            <person name="Madeira H.M.F."/>
            <person name="Manfio G.P."/>
            <person name="Maranhao A.Q."/>
            <person name="Martins W.S."/>
            <person name="di Mauro S.M.Z."/>
            <person name="de Medeiros S.R.B."/>
            <person name="Meissner R.V."/>
            <person name="Moreira M.A.M."/>
            <person name="Nascimento F.F."/>
            <person name="Nicolas M.F."/>
            <person name="Oliveira J.G."/>
            <person name="Oliveira S.C."/>
            <person name="Paixao R.F.C."/>
            <person name="Parente J.A."/>
            <person name="Pedrosa F.O."/>
            <person name="Pena S.D.J."/>
            <person name="Pereira J.O."/>
            <person name="Pereira M."/>
            <person name="Pinto L.S.R.C."/>
            <person name="Pinto L.S."/>
            <person name="Porto J.I.R."/>
            <person name="Potrich D.P."/>
            <person name="Ramalho-Neto C.E."/>
            <person name="Reis A.M.M."/>
            <person name="Rigo L.U."/>
            <person name="Rondinelli E."/>
            <person name="Santos E.B.P."/>
            <person name="Santos F.R."/>
            <person name="Schneider M.P.C."/>
            <person name="Seuanez H.N."/>
            <person name="Silva A.M.R."/>
            <person name="da Silva A.L.C."/>
            <person name="Silva D.W."/>
            <person name="Silva R."/>
            <person name="Simoes I.C."/>
            <person name="Simon D."/>
            <person name="Soares C.M.A."/>
            <person name="Soares R.B.A."/>
            <person name="Souza E.M."/>
            <person name="Souza K.R.L."/>
            <person name="Souza R.C."/>
            <person name="Steffens M.B.R."/>
            <person name="Steindel M."/>
            <person name="Teixeira S.R."/>
            <person name="Urmenyi T."/>
            <person name="Vettore A."/>
            <person name="Wassem R."/>
            <person name="Zaha A."/>
            <person name="Simpson A.J.G."/>
        </authorList>
    </citation>
    <scope>NUCLEOTIDE SEQUENCE [LARGE SCALE GENOMIC DNA]</scope>
    <source>
        <strain>ATCC 12472 / DSM 30191 / JCM 1249 / CCUG 213 / NBRC 12614 / NCIMB 9131 / NCTC 9757 / MK</strain>
    </source>
</reference>
<dbReference type="EMBL" id="AE016825">
    <property type="protein sequence ID" value="AAQ61359.1"/>
    <property type="molecule type" value="Genomic_DNA"/>
</dbReference>
<dbReference type="RefSeq" id="WP_011137244.1">
    <property type="nucleotide sequence ID" value="NC_005085.1"/>
</dbReference>
<dbReference type="SMR" id="Q7NRT3"/>
<dbReference type="STRING" id="243365.CV_3697"/>
<dbReference type="GeneID" id="66364930"/>
<dbReference type="KEGG" id="cvi:CV_3697"/>
<dbReference type="eggNOG" id="COG0102">
    <property type="taxonomic scope" value="Bacteria"/>
</dbReference>
<dbReference type="HOGENOM" id="CLU_082184_2_2_4"/>
<dbReference type="OrthoDB" id="9801330at2"/>
<dbReference type="Proteomes" id="UP000001424">
    <property type="component" value="Chromosome"/>
</dbReference>
<dbReference type="GO" id="GO:0022625">
    <property type="term" value="C:cytosolic large ribosomal subunit"/>
    <property type="evidence" value="ECO:0007669"/>
    <property type="project" value="TreeGrafter"/>
</dbReference>
<dbReference type="GO" id="GO:0003729">
    <property type="term" value="F:mRNA binding"/>
    <property type="evidence" value="ECO:0007669"/>
    <property type="project" value="TreeGrafter"/>
</dbReference>
<dbReference type="GO" id="GO:0003735">
    <property type="term" value="F:structural constituent of ribosome"/>
    <property type="evidence" value="ECO:0007669"/>
    <property type="project" value="InterPro"/>
</dbReference>
<dbReference type="GO" id="GO:0017148">
    <property type="term" value="P:negative regulation of translation"/>
    <property type="evidence" value="ECO:0007669"/>
    <property type="project" value="TreeGrafter"/>
</dbReference>
<dbReference type="GO" id="GO:0006412">
    <property type="term" value="P:translation"/>
    <property type="evidence" value="ECO:0007669"/>
    <property type="project" value="UniProtKB-UniRule"/>
</dbReference>
<dbReference type="CDD" id="cd00392">
    <property type="entry name" value="Ribosomal_L13"/>
    <property type="match status" value="1"/>
</dbReference>
<dbReference type="FunFam" id="3.90.1180.10:FF:000001">
    <property type="entry name" value="50S ribosomal protein L13"/>
    <property type="match status" value="1"/>
</dbReference>
<dbReference type="Gene3D" id="3.90.1180.10">
    <property type="entry name" value="Ribosomal protein L13"/>
    <property type="match status" value="1"/>
</dbReference>
<dbReference type="HAMAP" id="MF_01366">
    <property type="entry name" value="Ribosomal_uL13"/>
    <property type="match status" value="1"/>
</dbReference>
<dbReference type="InterPro" id="IPR005822">
    <property type="entry name" value="Ribosomal_uL13"/>
</dbReference>
<dbReference type="InterPro" id="IPR005823">
    <property type="entry name" value="Ribosomal_uL13_bac-type"/>
</dbReference>
<dbReference type="InterPro" id="IPR036899">
    <property type="entry name" value="Ribosomal_uL13_sf"/>
</dbReference>
<dbReference type="NCBIfam" id="TIGR01066">
    <property type="entry name" value="rplM_bact"/>
    <property type="match status" value="1"/>
</dbReference>
<dbReference type="PANTHER" id="PTHR11545:SF2">
    <property type="entry name" value="LARGE RIBOSOMAL SUBUNIT PROTEIN UL13M"/>
    <property type="match status" value="1"/>
</dbReference>
<dbReference type="PANTHER" id="PTHR11545">
    <property type="entry name" value="RIBOSOMAL PROTEIN L13"/>
    <property type="match status" value="1"/>
</dbReference>
<dbReference type="Pfam" id="PF00572">
    <property type="entry name" value="Ribosomal_L13"/>
    <property type="match status" value="1"/>
</dbReference>
<dbReference type="PIRSF" id="PIRSF002181">
    <property type="entry name" value="Ribosomal_L13"/>
    <property type="match status" value="1"/>
</dbReference>
<dbReference type="SUPFAM" id="SSF52161">
    <property type="entry name" value="Ribosomal protein L13"/>
    <property type="match status" value="1"/>
</dbReference>
<proteinExistence type="inferred from homology"/>
<name>RL13_CHRVO</name>
<comment type="function">
    <text evidence="1">This protein is one of the early assembly proteins of the 50S ribosomal subunit, although it is not seen to bind rRNA by itself. It is important during the early stages of 50S assembly.</text>
</comment>
<comment type="subunit">
    <text evidence="1">Part of the 50S ribosomal subunit.</text>
</comment>
<comment type="similarity">
    <text evidence="1">Belongs to the universal ribosomal protein uL13 family.</text>
</comment>
<organism>
    <name type="scientific">Chromobacterium violaceum (strain ATCC 12472 / DSM 30191 / JCM 1249 / CCUG 213 / NBRC 12614 / NCIMB 9131 / NCTC 9757 / MK)</name>
    <dbReference type="NCBI Taxonomy" id="243365"/>
    <lineage>
        <taxon>Bacteria</taxon>
        <taxon>Pseudomonadati</taxon>
        <taxon>Pseudomonadota</taxon>
        <taxon>Betaproteobacteria</taxon>
        <taxon>Neisseriales</taxon>
        <taxon>Chromobacteriaceae</taxon>
        <taxon>Chromobacterium</taxon>
    </lineage>
</organism>
<keyword id="KW-1185">Reference proteome</keyword>
<keyword id="KW-0687">Ribonucleoprotein</keyword>
<keyword id="KW-0689">Ribosomal protein</keyword>
<gene>
    <name evidence="1" type="primary">rplM</name>
    <name type="ordered locus">CV_3697</name>
</gene>
<protein>
    <recommendedName>
        <fullName evidence="1">Large ribosomal subunit protein uL13</fullName>
    </recommendedName>
    <alternativeName>
        <fullName evidence="2">50S ribosomal protein L13</fullName>
    </alternativeName>
</protein>
<sequence>MKTFSAKAHEVKREWYVVDAADKVLGRLAAEIARRLRGKHKPEFTPHVDTGDFIVVVNVEKLRVTGTKAQDKKYYRHSGYPGGIYERTFTELQNQFPERVLEKAVKGMLPKGPLGYAMIKKLKVYSGSEHPHAAQQPKVLEI</sequence>
<evidence type="ECO:0000255" key="1">
    <source>
        <dbReference type="HAMAP-Rule" id="MF_01366"/>
    </source>
</evidence>
<evidence type="ECO:0000305" key="2"/>
<feature type="chain" id="PRO_0000261709" description="Large ribosomal subunit protein uL13">
    <location>
        <begin position="1"/>
        <end position="142"/>
    </location>
</feature>
<accession>Q7NRT3</accession>